<name>LPXB_PSEAB</name>
<protein>
    <recommendedName>
        <fullName evidence="1">Lipid-A-disaccharide synthase</fullName>
        <ecNumber evidence="1">2.4.1.182</ecNumber>
    </recommendedName>
</protein>
<comment type="function">
    <text evidence="1">Condensation of UDP-2,3-diacylglucosamine and 2,3-diacylglucosamine-1-phosphate to form lipid A disaccharide, a precursor of lipid A, a phosphorylated glycolipid that anchors the lipopolysaccharide to the outer membrane of the cell.</text>
</comment>
<comment type="catalytic activity">
    <reaction evidence="1">
        <text>a lipid X + a UDP-2-N,3-O-bis[(3R)-3-hydroxyacyl]-alpha-D-glucosamine = a lipid A disaccharide + UDP + H(+)</text>
        <dbReference type="Rhea" id="RHEA:67828"/>
        <dbReference type="ChEBI" id="CHEBI:15378"/>
        <dbReference type="ChEBI" id="CHEBI:58223"/>
        <dbReference type="ChEBI" id="CHEBI:137748"/>
        <dbReference type="ChEBI" id="CHEBI:176338"/>
        <dbReference type="ChEBI" id="CHEBI:176343"/>
        <dbReference type="EC" id="2.4.1.182"/>
    </reaction>
</comment>
<comment type="pathway">
    <text evidence="1">Bacterial outer membrane biogenesis; LPS lipid A biosynthesis.</text>
</comment>
<comment type="similarity">
    <text evidence="1">Belongs to the LpxB family.</text>
</comment>
<gene>
    <name evidence="1" type="primary">lpxB</name>
    <name type="ordered locus">PA14_17220</name>
</gene>
<evidence type="ECO:0000255" key="1">
    <source>
        <dbReference type="HAMAP-Rule" id="MF_00392"/>
    </source>
</evidence>
<keyword id="KW-0328">Glycosyltransferase</keyword>
<keyword id="KW-0441">Lipid A biosynthesis</keyword>
<keyword id="KW-0444">Lipid biosynthesis</keyword>
<keyword id="KW-0443">Lipid metabolism</keyword>
<keyword id="KW-0808">Transferase</keyword>
<accession>Q02RB5</accession>
<proteinExistence type="inferred from homology"/>
<sequence>MADGLRVALVAGEASGDILGSGLMQALRARHPDIEFIGVGGPRMEAEGLSSYFPMERLSVMGLVEVLGRLPELLRRRKRLIRTLIEARPDVMIGIDAPDFTLGVEHKLRQAGLRTVHYVSPSVWAWRQKRVLKIREACDLMLALFPFEARFYEEHGVPVRFVGHPLANTIPLQADRAAARARLGLPADGQVVALMPGSRGGEVGKLGALFLDTAQRLLVERPGLRFVLPCASAARREQIEQMLQGREPLPLTLLDGASHEALAACDAVLIASGTATLEALLYKRPMVVAYRVAGLTYRILKRLVKSPYISLPNLLAGRLLVPELIQDAATPQALAATLSPLLDDGSQQVEFFDAIHRALRQDASAQAAEAVLQLVERR</sequence>
<reference key="1">
    <citation type="journal article" date="2006" name="Genome Biol.">
        <title>Genomic analysis reveals that Pseudomonas aeruginosa virulence is combinatorial.</title>
        <authorList>
            <person name="Lee D.G."/>
            <person name="Urbach J.M."/>
            <person name="Wu G."/>
            <person name="Liberati N.T."/>
            <person name="Feinbaum R.L."/>
            <person name="Miyata S."/>
            <person name="Diggins L.T."/>
            <person name="He J."/>
            <person name="Saucier M."/>
            <person name="Deziel E."/>
            <person name="Friedman L."/>
            <person name="Li L."/>
            <person name="Grills G."/>
            <person name="Montgomery K."/>
            <person name="Kucherlapati R."/>
            <person name="Rahme L.G."/>
            <person name="Ausubel F.M."/>
        </authorList>
    </citation>
    <scope>NUCLEOTIDE SEQUENCE [LARGE SCALE GENOMIC DNA]</scope>
    <source>
        <strain>UCBPP-PA14</strain>
    </source>
</reference>
<feature type="chain" id="PRO_1000049408" description="Lipid-A-disaccharide synthase">
    <location>
        <begin position="1"/>
        <end position="378"/>
    </location>
</feature>
<organism>
    <name type="scientific">Pseudomonas aeruginosa (strain UCBPP-PA14)</name>
    <dbReference type="NCBI Taxonomy" id="208963"/>
    <lineage>
        <taxon>Bacteria</taxon>
        <taxon>Pseudomonadati</taxon>
        <taxon>Pseudomonadota</taxon>
        <taxon>Gammaproteobacteria</taxon>
        <taxon>Pseudomonadales</taxon>
        <taxon>Pseudomonadaceae</taxon>
        <taxon>Pseudomonas</taxon>
    </lineage>
</organism>
<dbReference type="EC" id="2.4.1.182" evidence="1"/>
<dbReference type="EMBL" id="CP000438">
    <property type="protein sequence ID" value="ABJ12876.1"/>
    <property type="molecule type" value="Genomic_DNA"/>
</dbReference>
<dbReference type="RefSeq" id="WP_003109334.1">
    <property type="nucleotide sequence ID" value="NZ_CP034244.1"/>
</dbReference>
<dbReference type="SMR" id="Q02RB5"/>
<dbReference type="CAZy" id="GT19">
    <property type="family name" value="Glycosyltransferase Family 19"/>
</dbReference>
<dbReference type="KEGG" id="pau:PA14_17220"/>
<dbReference type="PseudoCAP" id="PA14_17220"/>
<dbReference type="HOGENOM" id="CLU_036577_3_0_6"/>
<dbReference type="BioCyc" id="PAER208963:G1G74-1418-MONOMER"/>
<dbReference type="UniPathway" id="UPA00973"/>
<dbReference type="Proteomes" id="UP000000653">
    <property type="component" value="Chromosome"/>
</dbReference>
<dbReference type="GO" id="GO:0016020">
    <property type="term" value="C:membrane"/>
    <property type="evidence" value="ECO:0007669"/>
    <property type="project" value="GOC"/>
</dbReference>
<dbReference type="GO" id="GO:0008915">
    <property type="term" value="F:lipid-A-disaccharide synthase activity"/>
    <property type="evidence" value="ECO:0007669"/>
    <property type="project" value="UniProtKB-UniRule"/>
</dbReference>
<dbReference type="GO" id="GO:0005543">
    <property type="term" value="F:phospholipid binding"/>
    <property type="evidence" value="ECO:0007669"/>
    <property type="project" value="TreeGrafter"/>
</dbReference>
<dbReference type="GO" id="GO:0009245">
    <property type="term" value="P:lipid A biosynthetic process"/>
    <property type="evidence" value="ECO:0007669"/>
    <property type="project" value="UniProtKB-UniRule"/>
</dbReference>
<dbReference type="FunFam" id="3.40.50.2000:FF:000245">
    <property type="entry name" value="Lipid-A-disaccharide synthase"/>
    <property type="match status" value="1"/>
</dbReference>
<dbReference type="Gene3D" id="3.40.50.2000">
    <property type="entry name" value="Glycogen Phosphorylase B"/>
    <property type="match status" value="1"/>
</dbReference>
<dbReference type="HAMAP" id="MF_00392">
    <property type="entry name" value="LpxB"/>
    <property type="match status" value="1"/>
</dbReference>
<dbReference type="InterPro" id="IPR003835">
    <property type="entry name" value="Glyco_trans_19"/>
</dbReference>
<dbReference type="NCBIfam" id="TIGR00215">
    <property type="entry name" value="lpxB"/>
    <property type="match status" value="1"/>
</dbReference>
<dbReference type="PANTHER" id="PTHR30372">
    <property type="entry name" value="LIPID-A-DISACCHARIDE SYNTHASE"/>
    <property type="match status" value="1"/>
</dbReference>
<dbReference type="PANTHER" id="PTHR30372:SF4">
    <property type="entry name" value="LIPID-A-DISACCHARIDE SYNTHASE, MITOCHONDRIAL-RELATED"/>
    <property type="match status" value="1"/>
</dbReference>
<dbReference type="Pfam" id="PF02684">
    <property type="entry name" value="LpxB"/>
    <property type="match status" value="1"/>
</dbReference>
<dbReference type="SUPFAM" id="SSF53756">
    <property type="entry name" value="UDP-Glycosyltransferase/glycogen phosphorylase"/>
    <property type="match status" value="1"/>
</dbReference>